<gene>
    <name evidence="1" type="primary">hldD</name>
    <name type="ordered locus">FN1703</name>
</gene>
<protein>
    <recommendedName>
        <fullName evidence="1">ADP-L-glycero-D-manno-heptose-6-epimerase</fullName>
        <ecNumber evidence="1">5.1.3.20</ecNumber>
    </recommendedName>
    <alternativeName>
        <fullName evidence="1">ADP-L-glycero-beta-D-manno-heptose-6-epimerase</fullName>
        <shortName evidence="1">ADP-glyceromanno-heptose 6-epimerase</shortName>
        <shortName evidence="1">ADP-hep 6-epimerase</shortName>
        <shortName evidence="1">AGME</shortName>
    </alternativeName>
</protein>
<comment type="function">
    <text evidence="1">Catalyzes the interconversion between ADP-D-glycero-beta-D-manno-heptose and ADP-L-glycero-beta-D-manno-heptose via an epimerization at carbon 6 of the heptose.</text>
</comment>
<comment type="catalytic activity">
    <reaction evidence="1">
        <text>ADP-D-glycero-beta-D-manno-heptose = ADP-L-glycero-beta-D-manno-heptose</text>
        <dbReference type="Rhea" id="RHEA:17577"/>
        <dbReference type="ChEBI" id="CHEBI:59967"/>
        <dbReference type="ChEBI" id="CHEBI:61506"/>
        <dbReference type="EC" id="5.1.3.20"/>
    </reaction>
</comment>
<comment type="cofactor">
    <cofactor evidence="1">
        <name>NADP(+)</name>
        <dbReference type="ChEBI" id="CHEBI:58349"/>
    </cofactor>
    <text evidence="1">Binds 1 NADP(+) per subunit.</text>
</comment>
<comment type="pathway">
    <text evidence="1">Nucleotide-sugar biosynthesis; ADP-L-glycero-beta-D-manno-heptose biosynthesis; ADP-L-glycero-beta-D-manno-heptose from D-glycero-beta-D-manno-heptose 7-phosphate: step 4/4.</text>
</comment>
<comment type="subunit">
    <text evidence="1">Homopentamer.</text>
</comment>
<comment type="domain">
    <text evidence="1">Contains a large N-terminal NADP-binding domain, and a smaller C-terminal substrate-binding domain.</text>
</comment>
<comment type="similarity">
    <text evidence="1">Belongs to the NAD(P)-dependent epimerase/dehydratase family. HldD subfamily.</text>
</comment>
<proteinExistence type="inferred from homology"/>
<sequence length="332" mass="38851">MIIVTGGAGMIGSAFVWKLNEMGIKDILIVDKLRKEDKWLNIRKREYYDWIDKDNLKEWLVCKENADNIEAVIHMGACSATTETDADFLMDNNFGYTKFLWNFCAEKNIKYIYASSAATYGMGELGYNDDVSPEELQKLMPLNKYGYSKKFFDDWAFKQKNQPKQWNGLKFFNVYGPQEYHKGRMASMVFHTYNQYKENGYVKLFKSYKEGFKDGEQLRDFVYVKDVVDIMYFMLVNDVKSGIYNIGTGKARSFMDLSMATMRAASHNDNLDKNEVVKLIEMPEDLQGRYQYFTEAKINKLREIGYTKEMHSLEEGVKDYVQNYLAKEDSYL</sequence>
<evidence type="ECO:0000255" key="1">
    <source>
        <dbReference type="HAMAP-Rule" id="MF_01601"/>
    </source>
</evidence>
<keyword id="KW-0119">Carbohydrate metabolism</keyword>
<keyword id="KW-0413">Isomerase</keyword>
<keyword id="KW-0521">NADP</keyword>
<keyword id="KW-1185">Reference proteome</keyword>
<feature type="chain" id="PRO_0000205796" description="ADP-L-glycero-D-manno-heptose-6-epimerase">
    <location>
        <begin position="1"/>
        <end position="332"/>
    </location>
</feature>
<feature type="active site" description="Proton acceptor" evidence="1">
    <location>
        <position position="145"/>
    </location>
</feature>
<feature type="active site" description="Proton acceptor" evidence="1">
    <location>
        <position position="182"/>
    </location>
</feature>
<feature type="binding site" evidence="1">
    <location>
        <begin position="10"/>
        <end position="11"/>
    </location>
    <ligand>
        <name>NADP(+)</name>
        <dbReference type="ChEBI" id="CHEBI:58349"/>
    </ligand>
</feature>
<feature type="binding site" evidence="1">
    <location>
        <begin position="31"/>
        <end position="32"/>
    </location>
    <ligand>
        <name>NADP(+)</name>
        <dbReference type="ChEBI" id="CHEBI:58349"/>
    </ligand>
</feature>
<feature type="binding site" evidence="1">
    <location>
        <position position="38"/>
    </location>
    <ligand>
        <name>NADP(+)</name>
        <dbReference type="ChEBI" id="CHEBI:58349"/>
    </ligand>
</feature>
<feature type="binding site" evidence="1">
    <location>
        <position position="53"/>
    </location>
    <ligand>
        <name>NADP(+)</name>
        <dbReference type="ChEBI" id="CHEBI:58349"/>
    </ligand>
</feature>
<feature type="binding site" evidence="1">
    <location>
        <begin position="75"/>
        <end position="79"/>
    </location>
    <ligand>
        <name>NADP(+)</name>
        <dbReference type="ChEBI" id="CHEBI:58349"/>
    </ligand>
</feature>
<feature type="binding site" evidence="1">
    <location>
        <position position="92"/>
    </location>
    <ligand>
        <name>NADP(+)</name>
        <dbReference type="ChEBI" id="CHEBI:58349"/>
    </ligand>
</feature>
<feature type="binding site" evidence="1">
    <location>
        <position position="149"/>
    </location>
    <ligand>
        <name>NADP(+)</name>
        <dbReference type="ChEBI" id="CHEBI:58349"/>
    </ligand>
</feature>
<feature type="binding site" evidence="1">
    <location>
        <position position="173"/>
    </location>
    <ligand>
        <name>substrate</name>
    </ligand>
</feature>
<feature type="binding site" evidence="1">
    <location>
        <position position="174"/>
    </location>
    <ligand>
        <name>NADP(+)</name>
        <dbReference type="ChEBI" id="CHEBI:58349"/>
    </ligand>
</feature>
<feature type="binding site" evidence="1">
    <location>
        <position position="182"/>
    </location>
    <ligand>
        <name>NADP(+)</name>
        <dbReference type="ChEBI" id="CHEBI:58349"/>
    </ligand>
</feature>
<feature type="binding site" evidence="1">
    <location>
        <position position="184"/>
    </location>
    <ligand>
        <name>substrate</name>
    </ligand>
</feature>
<feature type="binding site" evidence="1">
    <location>
        <position position="191"/>
    </location>
    <ligand>
        <name>substrate</name>
    </ligand>
</feature>
<feature type="binding site" evidence="1">
    <location>
        <begin position="205"/>
        <end position="208"/>
    </location>
    <ligand>
        <name>substrate</name>
    </ligand>
</feature>
<feature type="binding site" evidence="1">
    <location>
        <position position="219"/>
    </location>
    <ligand>
        <name>substrate</name>
    </ligand>
</feature>
<feature type="binding site" evidence="1">
    <location>
        <position position="290"/>
    </location>
    <ligand>
        <name>substrate</name>
    </ligand>
</feature>
<accession>Q8RIA5</accession>
<dbReference type="EC" id="5.1.3.20" evidence="1"/>
<dbReference type="EMBL" id="AE009951">
    <property type="protein sequence ID" value="AAL93818.1"/>
    <property type="molecule type" value="Genomic_DNA"/>
</dbReference>
<dbReference type="RefSeq" id="NP_602519.1">
    <property type="nucleotide sequence ID" value="NC_003454.1"/>
</dbReference>
<dbReference type="SMR" id="Q8RIA5"/>
<dbReference type="STRING" id="190304.FN1703"/>
<dbReference type="PaxDb" id="190304-FN1703"/>
<dbReference type="EnsemblBacteria" id="AAL93818">
    <property type="protein sequence ID" value="AAL93818"/>
    <property type="gene ID" value="FN1703"/>
</dbReference>
<dbReference type="KEGG" id="fnu:FN1703"/>
<dbReference type="PATRIC" id="fig|190304.8.peg.193"/>
<dbReference type="eggNOG" id="COG0451">
    <property type="taxonomic scope" value="Bacteria"/>
</dbReference>
<dbReference type="HOGENOM" id="CLU_007383_1_3_0"/>
<dbReference type="InParanoid" id="Q8RIA5"/>
<dbReference type="BioCyc" id="FNUC190304:G1FZS-205-MONOMER"/>
<dbReference type="UniPathway" id="UPA00356">
    <property type="reaction ID" value="UER00440"/>
</dbReference>
<dbReference type="Proteomes" id="UP000002521">
    <property type="component" value="Chromosome"/>
</dbReference>
<dbReference type="GO" id="GO:0008712">
    <property type="term" value="F:ADP-glyceromanno-heptose 6-epimerase activity"/>
    <property type="evidence" value="ECO:0007669"/>
    <property type="project" value="UniProtKB-UniRule"/>
</dbReference>
<dbReference type="GO" id="GO:0050661">
    <property type="term" value="F:NADP binding"/>
    <property type="evidence" value="ECO:0007669"/>
    <property type="project" value="InterPro"/>
</dbReference>
<dbReference type="GO" id="GO:0097171">
    <property type="term" value="P:ADP-L-glycero-beta-D-manno-heptose biosynthetic process"/>
    <property type="evidence" value="ECO:0007669"/>
    <property type="project" value="UniProtKB-UniPathway"/>
</dbReference>
<dbReference type="GO" id="GO:0005975">
    <property type="term" value="P:carbohydrate metabolic process"/>
    <property type="evidence" value="ECO:0007669"/>
    <property type="project" value="UniProtKB-UniRule"/>
</dbReference>
<dbReference type="CDD" id="cd05248">
    <property type="entry name" value="ADP_GME_SDR_e"/>
    <property type="match status" value="1"/>
</dbReference>
<dbReference type="Gene3D" id="3.40.50.720">
    <property type="entry name" value="NAD(P)-binding Rossmann-like Domain"/>
    <property type="match status" value="1"/>
</dbReference>
<dbReference type="Gene3D" id="3.90.25.10">
    <property type="entry name" value="UDP-galactose 4-epimerase, domain 1"/>
    <property type="match status" value="1"/>
</dbReference>
<dbReference type="HAMAP" id="MF_01601">
    <property type="entry name" value="Heptose_epimerase"/>
    <property type="match status" value="1"/>
</dbReference>
<dbReference type="InterPro" id="IPR001509">
    <property type="entry name" value="Epimerase_deHydtase"/>
</dbReference>
<dbReference type="InterPro" id="IPR011912">
    <property type="entry name" value="Heptose_epim"/>
</dbReference>
<dbReference type="InterPro" id="IPR036291">
    <property type="entry name" value="NAD(P)-bd_dom_sf"/>
</dbReference>
<dbReference type="NCBIfam" id="TIGR02197">
    <property type="entry name" value="heptose_epim"/>
    <property type="match status" value="1"/>
</dbReference>
<dbReference type="PANTHER" id="PTHR43103:SF3">
    <property type="entry name" value="ADP-L-GLYCERO-D-MANNO-HEPTOSE-6-EPIMERASE"/>
    <property type="match status" value="1"/>
</dbReference>
<dbReference type="PANTHER" id="PTHR43103">
    <property type="entry name" value="NUCLEOSIDE-DIPHOSPHATE-SUGAR EPIMERASE"/>
    <property type="match status" value="1"/>
</dbReference>
<dbReference type="Pfam" id="PF01370">
    <property type="entry name" value="Epimerase"/>
    <property type="match status" value="1"/>
</dbReference>
<dbReference type="SUPFAM" id="SSF51735">
    <property type="entry name" value="NAD(P)-binding Rossmann-fold domains"/>
    <property type="match status" value="1"/>
</dbReference>
<name>HLDD_FUSNN</name>
<reference key="1">
    <citation type="journal article" date="2002" name="J. Bacteriol.">
        <title>Genome sequence and analysis of the oral bacterium Fusobacterium nucleatum strain ATCC 25586.</title>
        <authorList>
            <person name="Kapatral V."/>
            <person name="Anderson I."/>
            <person name="Ivanova N."/>
            <person name="Reznik G."/>
            <person name="Los T."/>
            <person name="Lykidis A."/>
            <person name="Bhattacharyya A."/>
            <person name="Bartman A."/>
            <person name="Gardner W."/>
            <person name="Grechkin G."/>
            <person name="Zhu L."/>
            <person name="Vasieva O."/>
            <person name="Chu L."/>
            <person name="Kogan Y."/>
            <person name="Chaga O."/>
            <person name="Goltsman E."/>
            <person name="Bernal A."/>
            <person name="Larsen N."/>
            <person name="D'Souza M."/>
            <person name="Walunas T."/>
            <person name="Pusch G."/>
            <person name="Haselkorn R."/>
            <person name="Fonstein M."/>
            <person name="Kyrpides N.C."/>
            <person name="Overbeek R."/>
        </authorList>
    </citation>
    <scope>NUCLEOTIDE SEQUENCE [LARGE SCALE GENOMIC DNA]</scope>
    <source>
        <strain>ATCC 25586 / DSM 15643 / BCRC 10681 / CIP 101130 / JCM 8532 / KCTC 2640 / LMG 13131 / VPI 4355</strain>
    </source>
</reference>
<organism>
    <name type="scientific">Fusobacterium nucleatum subsp. nucleatum (strain ATCC 25586 / DSM 15643 / BCRC 10681 / CIP 101130 / JCM 8532 / KCTC 2640 / LMG 13131 / VPI 4355)</name>
    <dbReference type="NCBI Taxonomy" id="190304"/>
    <lineage>
        <taxon>Bacteria</taxon>
        <taxon>Fusobacteriati</taxon>
        <taxon>Fusobacteriota</taxon>
        <taxon>Fusobacteriia</taxon>
        <taxon>Fusobacteriales</taxon>
        <taxon>Fusobacteriaceae</taxon>
        <taxon>Fusobacterium</taxon>
    </lineage>
</organism>